<name>RSXC_ECO5E</name>
<feature type="chain" id="PRO_1000194512" description="Ion-translocating oxidoreductase complex subunit C">
    <location>
        <begin position="1"/>
        <end position="772"/>
    </location>
</feature>
<feature type="domain" description="4Fe-4S ferredoxin-type 1" evidence="1">
    <location>
        <begin position="369"/>
        <end position="397"/>
    </location>
</feature>
<feature type="domain" description="4Fe-4S ferredoxin-type 2" evidence="1">
    <location>
        <begin position="407"/>
        <end position="436"/>
    </location>
</feature>
<feature type="region of interest" description="Disordered" evidence="2">
    <location>
        <begin position="602"/>
        <end position="684"/>
    </location>
</feature>
<feature type="region of interest" description="Disordered" evidence="2">
    <location>
        <begin position="696"/>
        <end position="717"/>
    </location>
</feature>
<feature type="region of interest" description="Disordered" evidence="2">
    <location>
        <begin position="727"/>
        <end position="746"/>
    </location>
</feature>
<feature type="compositionally biased region" description="Low complexity" evidence="2">
    <location>
        <begin position="605"/>
        <end position="615"/>
    </location>
</feature>
<feature type="binding site" evidence="1">
    <location>
        <position position="377"/>
    </location>
    <ligand>
        <name>[4Fe-4S] cluster</name>
        <dbReference type="ChEBI" id="CHEBI:49883"/>
        <label>1</label>
    </ligand>
</feature>
<feature type="binding site" evidence="1">
    <location>
        <position position="380"/>
    </location>
    <ligand>
        <name>[4Fe-4S] cluster</name>
        <dbReference type="ChEBI" id="CHEBI:49883"/>
        <label>1</label>
    </ligand>
</feature>
<feature type="binding site" evidence="1">
    <location>
        <position position="383"/>
    </location>
    <ligand>
        <name>[4Fe-4S] cluster</name>
        <dbReference type="ChEBI" id="CHEBI:49883"/>
        <label>1</label>
    </ligand>
</feature>
<feature type="binding site" evidence="1">
    <location>
        <position position="387"/>
    </location>
    <ligand>
        <name>[4Fe-4S] cluster</name>
        <dbReference type="ChEBI" id="CHEBI:49883"/>
        <label>2</label>
    </ligand>
</feature>
<feature type="binding site" evidence="1">
    <location>
        <position position="416"/>
    </location>
    <ligand>
        <name>[4Fe-4S] cluster</name>
        <dbReference type="ChEBI" id="CHEBI:49883"/>
        <label>2</label>
    </ligand>
</feature>
<feature type="binding site" evidence="1">
    <location>
        <position position="419"/>
    </location>
    <ligand>
        <name>[4Fe-4S] cluster</name>
        <dbReference type="ChEBI" id="CHEBI:49883"/>
        <label>2</label>
    </ligand>
</feature>
<feature type="binding site" evidence="1">
    <location>
        <position position="422"/>
    </location>
    <ligand>
        <name>[4Fe-4S] cluster</name>
        <dbReference type="ChEBI" id="CHEBI:49883"/>
        <label>2</label>
    </ligand>
</feature>
<feature type="binding site" evidence="1">
    <location>
        <position position="426"/>
    </location>
    <ligand>
        <name>[4Fe-4S] cluster</name>
        <dbReference type="ChEBI" id="CHEBI:49883"/>
        <label>1</label>
    </ligand>
</feature>
<reference key="1">
    <citation type="journal article" date="2011" name="Proc. Natl. Acad. Sci. U.S.A.">
        <title>Genomic anatomy of Escherichia coli O157:H7 outbreaks.</title>
        <authorList>
            <person name="Eppinger M."/>
            <person name="Mammel M.K."/>
            <person name="Leclerc J.E."/>
            <person name="Ravel J."/>
            <person name="Cebula T.A."/>
        </authorList>
    </citation>
    <scope>NUCLEOTIDE SEQUENCE [LARGE SCALE GENOMIC DNA]</scope>
    <source>
        <strain>EC4115 / EHEC</strain>
    </source>
</reference>
<organism>
    <name type="scientific">Escherichia coli O157:H7 (strain EC4115 / EHEC)</name>
    <dbReference type="NCBI Taxonomy" id="444450"/>
    <lineage>
        <taxon>Bacteria</taxon>
        <taxon>Pseudomonadati</taxon>
        <taxon>Pseudomonadota</taxon>
        <taxon>Gammaproteobacteria</taxon>
        <taxon>Enterobacterales</taxon>
        <taxon>Enterobacteriaceae</taxon>
        <taxon>Escherichia</taxon>
    </lineage>
</organism>
<accession>B5Z463</accession>
<gene>
    <name evidence="1" type="primary">rsxC</name>
    <name type="ordered locus">ECH74115_2341</name>
</gene>
<comment type="function">
    <text evidence="1">Part of a membrane-bound complex that couples electron transfer with translocation of ions across the membrane. Required to maintain the reduced state of SoxR.</text>
</comment>
<comment type="cofactor">
    <cofactor evidence="1">
        <name>[4Fe-4S] cluster</name>
        <dbReference type="ChEBI" id="CHEBI:49883"/>
    </cofactor>
    <text evidence="1">Binds 2 [4Fe-4S] clusters per subunit.</text>
</comment>
<comment type="subunit">
    <text evidence="1">The complex is composed of six subunits: RsxA, RsxB, RsxC, RsxD, RsxE and RsxG.</text>
</comment>
<comment type="subcellular location">
    <subcellularLocation>
        <location evidence="1">Cell inner membrane</location>
        <topology evidence="1">Peripheral membrane protein</topology>
    </subcellularLocation>
</comment>
<comment type="similarity">
    <text evidence="1">Belongs to the 4Fe4S bacterial-type ferredoxin family. RnfC subfamily.</text>
</comment>
<protein>
    <recommendedName>
        <fullName evidence="1">Ion-translocating oxidoreductase complex subunit C</fullName>
        <ecNumber evidence="1">7.-.-.-</ecNumber>
    </recommendedName>
    <alternativeName>
        <fullName evidence="1">Rsx electron transport complex subunit C</fullName>
    </alternativeName>
</protein>
<keyword id="KW-0004">4Fe-4S</keyword>
<keyword id="KW-0997">Cell inner membrane</keyword>
<keyword id="KW-1003">Cell membrane</keyword>
<keyword id="KW-0249">Electron transport</keyword>
<keyword id="KW-0408">Iron</keyword>
<keyword id="KW-0411">Iron-sulfur</keyword>
<keyword id="KW-0472">Membrane</keyword>
<keyword id="KW-0479">Metal-binding</keyword>
<keyword id="KW-0677">Repeat</keyword>
<keyword id="KW-1278">Translocase</keyword>
<keyword id="KW-0813">Transport</keyword>
<evidence type="ECO:0000255" key="1">
    <source>
        <dbReference type="HAMAP-Rule" id="MF_00461"/>
    </source>
</evidence>
<evidence type="ECO:0000256" key="2">
    <source>
        <dbReference type="SAM" id="MobiDB-lite"/>
    </source>
</evidence>
<sequence length="772" mass="83781">MLKLFSAFRKNKIWDFNGGIHPPEMKTQSNGTPLRQVPLAQRFVIPLKQHIGAEGELCVSVGDKVLRGQPLTRGRGKMLPVHAPTSGTVTAIAPHSTAHPSALAELSVIIDADGEDCWIPRDGWADYRSRRREELIERIHQFGVAGLGGAGFPTGVKLQGGGDKIETLIINAAECEPYITADDRLMQDCAAQVVEGIRILAHILQPREILIGIEDNKPQAISMLRAVLADSHDISMRVIPTKYPSGGAKQLTYILTGKQVPHGGRSSDIGVLMQNVGTAYAVKRAVIDGEPITERVVTLTGEAIARPGNVWARLGTPVRHLLNDAGFCPSADQMVIMGGPLMGFTLPWLDVPVVKITNCLLAPSANELGEPQEEQSCIRCSACADACPADLLPQQLYWFSKGQQHDKATTHNIADCIECGACAWVCPSNIPLVQYFRQEKAEIAAIRQEEKRAAEAKARFEARQARLEREKAARLERHKSAAVQPAAKDKDAIAAALARVKEKQAQATQPIVIKAGERPDNSAIIAAREARKAQARAKQAELQQTNDAATVTDPRKTAVEAAIARAKARKLEQQQANAEPEQQVDPRKAAVEAAIARAKARKLEQQQANAEPEQQVDPRKAAVEAAIARAKARKLEQQQANAEPEEPVDPRKAAVEAAIARAKARKLEQQQANAEPEEPVDPRKAAVEAAITRAKARKLEQQQANAEPEEQVDPRKAAVAAAIARAKARKLEQQQANAEPEEQVDPRKAAVAAAIARVQAKKAVQQKVVNED</sequence>
<dbReference type="EC" id="7.-.-.-" evidence="1"/>
<dbReference type="EMBL" id="CP001164">
    <property type="protein sequence ID" value="ACI38470.1"/>
    <property type="molecule type" value="Genomic_DNA"/>
</dbReference>
<dbReference type="RefSeq" id="WP_000915707.1">
    <property type="nucleotide sequence ID" value="NC_011353.1"/>
</dbReference>
<dbReference type="SMR" id="B5Z463"/>
<dbReference type="KEGG" id="ecf:ECH74115_2341"/>
<dbReference type="HOGENOM" id="CLU_010808_2_1_6"/>
<dbReference type="GO" id="GO:0005886">
    <property type="term" value="C:plasma membrane"/>
    <property type="evidence" value="ECO:0007669"/>
    <property type="project" value="UniProtKB-SubCell"/>
</dbReference>
<dbReference type="GO" id="GO:0051539">
    <property type="term" value="F:4 iron, 4 sulfur cluster binding"/>
    <property type="evidence" value="ECO:0007669"/>
    <property type="project" value="UniProtKB-KW"/>
</dbReference>
<dbReference type="GO" id="GO:0009055">
    <property type="term" value="F:electron transfer activity"/>
    <property type="evidence" value="ECO:0007669"/>
    <property type="project" value="InterPro"/>
</dbReference>
<dbReference type="GO" id="GO:0046872">
    <property type="term" value="F:metal ion binding"/>
    <property type="evidence" value="ECO:0007669"/>
    <property type="project" value="UniProtKB-KW"/>
</dbReference>
<dbReference type="GO" id="GO:0022900">
    <property type="term" value="P:electron transport chain"/>
    <property type="evidence" value="ECO:0007669"/>
    <property type="project" value="UniProtKB-UniRule"/>
</dbReference>
<dbReference type="Gene3D" id="3.30.70.20">
    <property type="match status" value="1"/>
</dbReference>
<dbReference type="Gene3D" id="3.40.50.11540">
    <property type="entry name" value="NADH-ubiquinone oxidoreductase 51kDa subunit"/>
    <property type="match status" value="1"/>
</dbReference>
<dbReference type="HAMAP" id="MF_00461">
    <property type="entry name" value="RsxC_RnfC"/>
    <property type="match status" value="1"/>
</dbReference>
<dbReference type="InterPro" id="IPR017896">
    <property type="entry name" value="4Fe4S_Fe-S-bd"/>
</dbReference>
<dbReference type="InterPro" id="IPR017900">
    <property type="entry name" value="4Fe4S_Fe_S_CS"/>
</dbReference>
<dbReference type="InterPro" id="IPR010208">
    <property type="entry name" value="Ion_transpt_RnfC/RsxC"/>
</dbReference>
<dbReference type="InterPro" id="IPR011538">
    <property type="entry name" value="Nuo51_FMN-bd"/>
</dbReference>
<dbReference type="InterPro" id="IPR037225">
    <property type="entry name" value="Nuo51_FMN-bd_sf"/>
</dbReference>
<dbReference type="InterPro" id="IPR026902">
    <property type="entry name" value="RnfC_N"/>
</dbReference>
<dbReference type="InterPro" id="IPR019554">
    <property type="entry name" value="Soluble_ligand-bd"/>
</dbReference>
<dbReference type="NCBIfam" id="NF003454">
    <property type="entry name" value="PRK05035.1"/>
    <property type="match status" value="1"/>
</dbReference>
<dbReference type="NCBIfam" id="TIGR01945">
    <property type="entry name" value="rnfC"/>
    <property type="match status" value="1"/>
</dbReference>
<dbReference type="PANTHER" id="PTHR43034">
    <property type="entry name" value="ION-TRANSLOCATING OXIDOREDUCTASE COMPLEX SUBUNIT C"/>
    <property type="match status" value="1"/>
</dbReference>
<dbReference type="PANTHER" id="PTHR43034:SF2">
    <property type="entry name" value="ION-TRANSLOCATING OXIDOREDUCTASE COMPLEX SUBUNIT C"/>
    <property type="match status" value="1"/>
</dbReference>
<dbReference type="Pfam" id="PF01512">
    <property type="entry name" value="Complex1_51K"/>
    <property type="match status" value="1"/>
</dbReference>
<dbReference type="Pfam" id="PF12838">
    <property type="entry name" value="Fer4_7"/>
    <property type="match status" value="1"/>
</dbReference>
<dbReference type="Pfam" id="PF13375">
    <property type="entry name" value="RnfC_N"/>
    <property type="match status" value="1"/>
</dbReference>
<dbReference type="Pfam" id="PF10531">
    <property type="entry name" value="SLBB"/>
    <property type="match status" value="1"/>
</dbReference>
<dbReference type="SUPFAM" id="SSF46548">
    <property type="entry name" value="alpha-helical ferredoxin"/>
    <property type="match status" value="1"/>
</dbReference>
<dbReference type="SUPFAM" id="SSF142019">
    <property type="entry name" value="Nqo1 FMN-binding domain-like"/>
    <property type="match status" value="1"/>
</dbReference>
<dbReference type="PROSITE" id="PS00198">
    <property type="entry name" value="4FE4S_FER_1"/>
    <property type="match status" value="2"/>
</dbReference>
<dbReference type="PROSITE" id="PS51379">
    <property type="entry name" value="4FE4S_FER_2"/>
    <property type="match status" value="2"/>
</dbReference>
<proteinExistence type="inferred from homology"/>